<evidence type="ECO:0000255" key="1">
    <source>
        <dbReference type="PROSITE-ProRule" id="PRU00227"/>
    </source>
</evidence>
<evidence type="ECO:0000256" key="2">
    <source>
        <dbReference type="SAM" id="MobiDB-lite"/>
    </source>
</evidence>
<evidence type="ECO:0000269" key="3">
    <source>
    </source>
</evidence>
<evidence type="ECO:0000269" key="4">
    <source>
    </source>
</evidence>
<evidence type="ECO:0000269" key="5">
    <source>
    </source>
</evidence>
<evidence type="ECO:0000305" key="6"/>
<proteinExistence type="evidence at transcript level"/>
<protein>
    <recommendedName>
        <fullName>Xylanolytic transcriptional activator xlnR</fullName>
    </recommendedName>
    <alternativeName>
        <fullName>Xylanase regulator</fullName>
    </alternativeName>
</protein>
<reference key="1">
    <citation type="journal article" date="2008" name="Fungal Genet. Biol.">
        <title>CreA mediates repression of the regulatory gene xlnR which controls the production of xylanolytic enzymes in Aspergillus nidulans.</title>
        <authorList>
            <person name="Tamayo E.N."/>
            <person name="Villanueva A."/>
            <person name="Hasper A.A."/>
            <person name="de Graaff L.H."/>
            <person name="Ramon D."/>
            <person name="Orejas M."/>
        </authorList>
    </citation>
    <scope>NUCLEOTIDE SEQUENCE [GENOMIC DNA]</scope>
    <scope>INDUCTION</scope>
    <scope>FUNCTION</scope>
</reference>
<reference key="2">
    <citation type="journal article" date="2005" name="Nature">
        <title>Sequencing of Aspergillus nidulans and comparative analysis with A. fumigatus and A. oryzae.</title>
        <authorList>
            <person name="Galagan J.E."/>
            <person name="Calvo S.E."/>
            <person name="Cuomo C."/>
            <person name="Ma L.-J."/>
            <person name="Wortman J.R."/>
            <person name="Batzoglou S."/>
            <person name="Lee S.-I."/>
            <person name="Bastuerkmen M."/>
            <person name="Spevak C.C."/>
            <person name="Clutterbuck J."/>
            <person name="Kapitonov V."/>
            <person name="Jurka J."/>
            <person name="Scazzocchio C."/>
            <person name="Farman M.L."/>
            <person name="Butler J."/>
            <person name="Purcell S."/>
            <person name="Harris S."/>
            <person name="Braus G.H."/>
            <person name="Draht O."/>
            <person name="Busch S."/>
            <person name="D'Enfert C."/>
            <person name="Bouchier C."/>
            <person name="Goldman G.H."/>
            <person name="Bell-Pedersen D."/>
            <person name="Griffiths-Jones S."/>
            <person name="Doonan J.H."/>
            <person name="Yu J."/>
            <person name="Vienken K."/>
            <person name="Pain A."/>
            <person name="Freitag M."/>
            <person name="Selker E.U."/>
            <person name="Archer D.B."/>
            <person name="Penalva M.A."/>
            <person name="Oakley B.R."/>
            <person name="Momany M."/>
            <person name="Tanaka T."/>
            <person name="Kumagai T."/>
            <person name="Asai K."/>
            <person name="Machida M."/>
            <person name="Nierman W.C."/>
            <person name="Denning D.W."/>
            <person name="Caddick M.X."/>
            <person name="Hynes M."/>
            <person name="Paoletti M."/>
            <person name="Fischer R."/>
            <person name="Miller B.L."/>
            <person name="Dyer P.S."/>
            <person name="Sachs M.S."/>
            <person name="Osmani S.A."/>
            <person name="Birren B.W."/>
        </authorList>
    </citation>
    <scope>NUCLEOTIDE SEQUENCE [LARGE SCALE GENOMIC DNA]</scope>
    <source>
        <strain>FGSC A4 / ATCC 38163 / CBS 112.46 / NRRL 194 / M139</strain>
    </source>
</reference>
<reference key="3">
    <citation type="journal article" date="2009" name="Fungal Genet. Biol.">
        <title>The 2008 update of the Aspergillus nidulans genome annotation: a community effort.</title>
        <authorList>
            <person name="Wortman J.R."/>
            <person name="Gilsenan J.M."/>
            <person name="Joardar V."/>
            <person name="Deegan J."/>
            <person name="Clutterbuck J."/>
            <person name="Andersen M.R."/>
            <person name="Archer D."/>
            <person name="Bencina M."/>
            <person name="Braus G."/>
            <person name="Coutinho P."/>
            <person name="von Dohren H."/>
            <person name="Doonan J."/>
            <person name="Driessen A.J."/>
            <person name="Durek P."/>
            <person name="Espeso E."/>
            <person name="Fekete E."/>
            <person name="Flipphi M."/>
            <person name="Estrada C.G."/>
            <person name="Geysens S."/>
            <person name="Goldman G."/>
            <person name="de Groot P.W."/>
            <person name="Hansen K."/>
            <person name="Harris S.D."/>
            <person name="Heinekamp T."/>
            <person name="Helmstaedt K."/>
            <person name="Henrissat B."/>
            <person name="Hofmann G."/>
            <person name="Homan T."/>
            <person name="Horio T."/>
            <person name="Horiuchi H."/>
            <person name="James S."/>
            <person name="Jones M."/>
            <person name="Karaffa L."/>
            <person name="Karanyi Z."/>
            <person name="Kato M."/>
            <person name="Keller N."/>
            <person name="Kelly D.E."/>
            <person name="Kiel J.A."/>
            <person name="Kim J.M."/>
            <person name="van der Klei I.J."/>
            <person name="Klis F.M."/>
            <person name="Kovalchuk A."/>
            <person name="Krasevec N."/>
            <person name="Kubicek C.P."/>
            <person name="Liu B."/>
            <person name="Maccabe A."/>
            <person name="Meyer V."/>
            <person name="Mirabito P."/>
            <person name="Miskei M."/>
            <person name="Mos M."/>
            <person name="Mullins J."/>
            <person name="Nelson D.R."/>
            <person name="Nielsen J."/>
            <person name="Oakley B.R."/>
            <person name="Osmani S.A."/>
            <person name="Pakula T."/>
            <person name="Paszewski A."/>
            <person name="Paulsen I."/>
            <person name="Pilsyk S."/>
            <person name="Pocsi I."/>
            <person name="Punt P.J."/>
            <person name="Ram A.F."/>
            <person name="Ren Q."/>
            <person name="Robellet X."/>
            <person name="Robson G."/>
            <person name="Seiboth B."/>
            <person name="van Solingen P."/>
            <person name="Specht T."/>
            <person name="Sun J."/>
            <person name="Taheri-Talesh N."/>
            <person name="Takeshita N."/>
            <person name="Ussery D."/>
            <person name="vanKuyk P.A."/>
            <person name="Visser H."/>
            <person name="van de Vondervoort P.J."/>
            <person name="de Vries R.P."/>
            <person name="Walton J."/>
            <person name="Xiang X."/>
            <person name="Xiong Y."/>
            <person name="Zeng A.P."/>
            <person name="Brandt B.W."/>
            <person name="Cornell M.J."/>
            <person name="van den Hondel C.A."/>
            <person name="Visser J."/>
            <person name="Oliver S.G."/>
            <person name="Turner G."/>
        </authorList>
    </citation>
    <scope>GENOME REANNOTATION</scope>
    <source>
        <strain>FGSC A4 / ATCC 38163 / CBS 112.46 / NRRL 194 / M139</strain>
    </source>
</reference>
<reference key="4">
    <citation type="journal article" date="2008" name="Proc. Natl. Acad. Sci. U.S.A.">
        <title>A trispecies Aspergillus microarray: comparative transcriptomics of three Aspergillus species.</title>
        <authorList>
            <person name="Andersen M.R."/>
            <person name="Vongsangnak W."/>
            <person name="Panagiotou G."/>
            <person name="Salazar M.P."/>
            <person name="Lehmann L."/>
            <person name="Nielsen J."/>
        </authorList>
    </citation>
    <scope>INDUCTION</scope>
    <scope>FUNCTION</scope>
</reference>
<reference key="5">
    <citation type="journal article" date="2011" name="Appl. Microbiol. Biotechnol.">
        <title>Regulation of pentose utilisation by AraR, but not XlnR, differs in Aspergillus nidulans and Aspergillus niger.</title>
        <authorList>
            <person name="Battaglia E."/>
            <person name="Hansen S.F."/>
            <person name="Leendertse A."/>
            <person name="Madrid S."/>
            <person name="Mulder H."/>
            <person name="Nikolaev I."/>
            <person name="de Vries R.P."/>
        </authorList>
    </citation>
    <scope>FUNCTION</scope>
    <scope>DISRUPTION PHENOTYPE</scope>
</reference>
<gene>
    <name type="primary">xlnR</name>
    <name type="ORF">AN7610</name>
</gene>
<comment type="function">
    <text evidence="3 4 5">Transcriptional activator of the xylanolytic system. Involved in the regulation of extracellular cellulolytic and xylanolytic genes and in the regulation of the intracellular activities of D-xylose catabolic genes in the pentose catabolic pathway (PCP) in response to the presence of D-xylose. Binds to the DNA sequence 5'-GGNTAAA-3'.</text>
</comment>
<comment type="subcellular location">
    <subcellularLocation>
        <location evidence="1">Nucleus</location>
    </subcellularLocation>
</comment>
<comment type="induction">
    <text evidence="3 4">Expressed in presence of xylose. Repressed in presence of glucose through the action of the creA transcription repressor.</text>
</comment>
<comment type="disruption phenotype">
    <text evidence="5">Reduces growth on birchwod xylan, while growth is unaffected on D-xylose, xylitol and other carbon sources like D-glucose, L-arabinose or L-arabitol.</text>
</comment>
<comment type="similarity">
    <text evidence="6">Belongs to the xlnR/xlr1 family.</text>
</comment>
<comment type="sequence caution" evidence="6">
    <conflict type="frameshift">
        <sequence resource="EMBL-CDS" id="CAC81360"/>
    </conflict>
</comment>
<comment type="sequence caution" evidence="6">
    <conflict type="erroneous initiation">
        <sequence resource="EMBL-CDS" id="CBF79739"/>
    </conflict>
</comment>
<comment type="sequence caution" evidence="6">
    <conflict type="erroneous initiation">
        <sequence resource="EMBL-CDS" id="EAA61796"/>
    </conflict>
</comment>
<organism>
    <name type="scientific">Emericella nidulans (strain FGSC A4 / ATCC 38163 / CBS 112.46 / NRRL 194 / M139)</name>
    <name type="common">Aspergillus nidulans</name>
    <dbReference type="NCBI Taxonomy" id="227321"/>
    <lineage>
        <taxon>Eukaryota</taxon>
        <taxon>Fungi</taxon>
        <taxon>Dikarya</taxon>
        <taxon>Ascomycota</taxon>
        <taxon>Pezizomycotina</taxon>
        <taxon>Eurotiomycetes</taxon>
        <taxon>Eurotiomycetidae</taxon>
        <taxon>Eurotiales</taxon>
        <taxon>Aspergillaceae</taxon>
        <taxon>Aspergillus</taxon>
        <taxon>Aspergillus subgen. Nidulantes</taxon>
    </lineage>
</organism>
<keyword id="KW-0010">Activator</keyword>
<keyword id="KW-0238">DNA-binding</keyword>
<keyword id="KW-0479">Metal-binding</keyword>
<keyword id="KW-0539">Nucleus</keyword>
<keyword id="KW-1185">Reference proteome</keyword>
<keyword id="KW-0804">Transcription</keyword>
<keyword id="KW-0805">Transcription regulation</keyword>
<keyword id="KW-0862">Zinc</keyword>
<name>XLNR_EMENI</name>
<accession>Q5AVS0</accession>
<accession>C8VBV6</accession>
<accession>Q8J128</accession>
<dbReference type="EMBL" id="AJ272537">
    <property type="protein sequence ID" value="CAC81360.1"/>
    <property type="status" value="ALT_FRAME"/>
    <property type="molecule type" value="Genomic_DNA"/>
</dbReference>
<dbReference type="EMBL" id="AACD01000130">
    <property type="protein sequence ID" value="EAA61796.1"/>
    <property type="status" value="ALT_INIT"/>
    <property type="molecule type" value="Genomic_DNA"/>
</dbReference>
<dbReference type="EMBL" id="BN001304">
    <property type="protein sequence ID" value="CBF79739.1"/>
    <property type="status" value="ALT_INIT"/>
    <property type="molecule type" value="Genomic_DNA"/>
</dbReference>
<dbReference type="RefSeq" id="XP_680879.1">
    <property type="nucleotide sequence ID" value="XM_675787.1"/>
</dbReference>
<dbReference type="SMR" id="Q5AVS0"/>
<dbReference type="STRING" id="227321.Q5AVS0"/>
<dbReference type="KEGG" id="ani:ANIA_07610"/>
<dbReference type="eggNOG" id="ENOG502QUI0">
    <property type="taxonomic scope" value="Eukaryota"/>
</dbReference>
<dbReference type="HOGENOM" id="CLU_006123_1_0_1"/>
<dbReference type="InParanoid" id="Q5AVS0"/>
<dbReference type="OrthoDB" id="5365785at2759"/>
<dbReference type="Proteomes" id="UP000000560">
    <property type="component" value="Chromosome IV"/>
</dbReference>
<dbReference type="GO" id="GO:0005634">
    <property type="term" value="C:nucleus"/>
    <property type="evidence" value="ECO:0007669"/>
    <property type="project" value="UniProtKB-SubCell"/>
</dbReference>
<dbReference type="GO" id="GO:0003677">
    <property type="term" value="F:DNA binding"/>
    <property type="evidence" value="ECO:0007669"/>
    <property type="project" value="UniProtKB-KW"/>
</dbReference>
<dbReference type="GO" id="GO:0000981">
    <property type="term" value="F:DNA-binding transcription factor activity, RNA polymerase II-specific"/>
    <property type="evidence" value="ECO:0007669"/>
    <property type="project" value="InterPro"/>
</dbReference>
<dbReference type="GO" id="GO:0008270">
    <property type="term" value="F:zinc ion binding"/>
    <property type="evidence" value="ECO:0007669"/>
    <property type="project" value="InterPro"/>
</dbReference>
<dbReference type="GO" id="GO:0006351">
    <property type="term" value="P:DNA-templated transcription"/>
    <property type="evidence" value="ECO:0007669"/>
    <property type="project" value="InterPro"/>
</dbReference>
<dbReference type="GO" id="GO:0045893">
    <property type="term" value="P:positive regulation of DNA-templated transcription"/>
    <property type="evidence" value="ECO:0000315"/>
    <property type="project" value="UniProtKB"/>
</dbReference>
<dbReference type="GO" id="GO:0045493">
    <property type="term" value="P:xylan catabolic process"/>
    <property type="evidence" value="ECO:0000315"/>
    <property type="project" value="UniProtKB"/>
</dbReference>
<dbReference type="CDD" id="cd12148">
    <property type="entry name" value="fungal_TF_MHR"/>
    <property type="match status" value="1"/>
</dbReference>
<dbReference type="CDD" id="cd00067">
    <property type="entry name" value="GAL4"/>
    <property type="match status" value="1"/>
</dbReference>
<dbReference type="FunFam" id="4.10.240.10:FF:000004">
    <property type="entry name" value="Xylanolytic transcriptional activator XlnR"/>
    <property type="match status" value="1"/>
</dbReference>
<dbReference type="Gene3D" id="4.10.240.10">
    <property type="entry name" value="Zn(2)-C6 fungal-type DNA-binding domain"/>
    <property type="match status" value="1"/>
</dbReference>
<dbReference type="InterPro" id="IPR007219">
    <property type="entry name" value="Transcription_factor_dom_fun"/>
</dbReference>
<dbReference type="InterPro" id="IPR051439">
    <property type="entry name" value="XlnR/Xlr1"/>
</dbReference>
<dbReference type="InterPro" id="IPR036864">
    <property type="entry name" value="Zn2-C6_fun-type_DNA-bd_sf"/>
</dbReference>
<dbReference type="InterPro" id="IPR001138">
    <property type="entry name" value="Zn2Cys6_DnaBD"/>
</dbReference>
<dbReference type="PANTHER" id="PTHR47663">
    <property type="entry name" value="XYLANOLYTIC TRANSCRIPTIONAL ACTIVATOR XLNR-RELATED"/>
    <property type="match status" value="1"/>
</dbReference>
<dbReference type="PANTHER" id="PTHR47663:SF1">
    <property type="entry name" value="XYLANOLYTIC TRANSCRIPTIONAL ACTIVATOR XLNR-RELATED"/>
    <property type="match status" value="1"/>
</dbReference>
<dbReference type="Pfam" id="PF04082">
    <property type="entry name" value="Fungal_trans"/>
    <property type="match status" value="1"/>
</dbReference>
<dbReference type="Pfam" id="PF00172">
    <property type="entry name" value="Zn_clus"/>
    <property type="match status" value="1"/>
</dbReference>
<dbReference type="SMART" id="SM00906">
    <property type="entry name" value="Fungal_trans"/>
    <property type="match status" value="1"/>
</dbReference>
<dbReference type="SMART" id="SM00066">
    <property type="entry name" value="GAL4"/>
    <property type="match status" value="1"/>
</dbReference>
<dbReference type="SUPFAM" id="SSF57701">
    <property type="entry name" value="Zn2/Cys6 DNA-binding domain"/>
    <property type="match status" value="1"/>
</dbReference>
<dbReference type="PROSITE" id="PS50048">
    <property type="entry name" value="ZN2_CY6_FUNGAL_2"/>
    <property type="match status" value="1"/>
</dbReference>
<feature type="chain" id="PRO_0000393156" description="Xylanolytic transcriptional activator xlnR">
    <location>
        <begin position="1"/>
        <end position="900"/>
    </location>
</feature>
<feature type="DNA-binding region" description="Zn(2)-C6 fungal-type" evidence="1">
    <location>
        <begin position="98"/>
        <end position="124"/>
    </location>
</feature>
<feature type="region of interest" description="Disordered" evidence="2">
    <location>
        <begin position="53"/>
        <end position="75"/>
    </location>
</feature>
<feature type="region of interest" description="Disordered" evidence="2">
    <location>
        <begin position="137"/>
        <end position="169"/>
    </location>
</feature>
<feature type="region of interest" description="Disordered" evidence="2">
    <location>
        <begin position="520"/>
        <end position="559"/>
    </location>
</feature>
<feature type="region of interest" description="Disordered" evidence="2">
    <location>
        <begin position="701"/>
        <end position="722"/>
    </location>
</feature>
<feature type="compositionally biased region" description="Polar residues" evidence="2">
    <location>
        <begin position="53"/>
        <end position="71"/>
    </location>
</feature>
<feature type="compositionally biased region" description="Basic and acidic residues" evidence="2">
    <location>
        <begin position="531"/>
        <end position="542"/>
    </location>
</feature>
<feature type="compositionally biased region" description="Polar residues" evidence="2">
    <location>
        <begin position="543"/>
        <end position="557"/>
    </location>
</feature>
<feature type="compositionally biased region" description="Low complexity" evidence="2">
    <location>
        <begin position="712"/>
        <end position="722"/>
    </location>
</feature>
<feature type="sequence conflict" description="In Ref. 1; CAC81360." evidence="6" ref="1">
    <original>GHS</original>
    <variation>ATG</variation>
    <location>
        <begin position="627"/>
        <end position="629"/>
    </location>
</feature>
<sequence length="900" mass="98441">MSTTSLQQFATATSFSPFSNSQSARMSQSQSQTIGLDTLAEGSQYVLEQLQLSREGGNSENNSTFKPSSVRDSLAEARSMIRKNSSSAPVRRRISRACDQCNQLRTKCDGQNPCAHCIEFGLTCEYARERKKRGKASKKDIAAAAAAAGHQGGMGNRSPTDRRLSQEPGGRYDSVLEASRVQSHLPANGLSSIHNTQAAHSQPPLGSALDALHLNHFTQLNESGRSQMPVSDLRSLQILHNNPRSPSALPHGLNAYNDNTFSLLNSQEPNTTSLNHFRLGNSTDNPSAQFLGLSPPAQSPGWLPLPSPSPANFPSFPMAPFSGTSLRYPVLQPVLPHIASIIPQSLACDLLDLYFTSSSSSHLSPQSPYVVGYIFRKQSFLHPTKPRVCSPGLLASMLWVGAQTSDAPFLTSPPSARGRVCQKLLELTIGLLRPLIHGPALGEASPNYAANMVINGVALGGFGVSMDQLGAQSTATGAVDDVATYVHLATVVSASEYKAASMRWWTAAWSLARELKLGRELPPNASQPGQDGERENEGDNPSKRNQSLHGGNSNVNVTEEEREERRRLWWLLYATDRHLALCYNRPLTLLDKECSQLLQPMNDDLWQAGDFPAATYRAVGPPIECTGHSMFGYFLPLMTILGGIIDLQQAREHPRYGLTFRSGPDLDQYIMAITQQLDAYGQSLKDFEARYINSLALAENEPPENPHIDHLSPSGRSSSTVGSRVNESIVHTKMVVAYGTHIMHVLYVLLAGKWDPINLLEDHDMWISSESFLAAMSHAVGAAEAAADILEYDPDLSFMPFFFGIYLLQGSFLLLLAADKLQGDANPSVVRACETIVRAHEACVVTLNTEYQRTFRKVMRSALAQVRGRVPDDFGEQQQRRREVLSLYRWTGDGTGLALS</sequence>